<reference key="1">
    <citation type="journal article" date="2004" name="Nature">
        <title>The DNA sequence and biology of human chromosome 19.</title>
        <authorList>
            <person name="Grimwood J."/>
            <person name="Gordon L.A."/>
            <person name="Olsen A.S."/>
            <person name="Terry A."/>
            <person name="Schmutz J."/>
            <person name="Lamerdin J.E."/>
            <person name="Hellsten U."/>
            <person name="Goodstein D."/>
            <person name="Couronne O."/>
            <person name="Tran-Gyamfi M."/>
            <person name="Aerts A."/>
            <person name="Altherr M."/>
            <person name="Ashworth L."/>
            <person name="Bajorek E."/>
            <person name="Black S."/>
            <person name="Branscomb E."/>
            <person name="Caenepeel S."/>
            <person name="Carrano A.V."/>
            <person name="Caoile C."/>
            <person name="Chan Y.M."/>
            <person name="Christensen M."/>
            <person name="Cleland C.A."/>
            <person name="Copeland A."/>
            <person name="Dalin E."/>
            <person name="Dehal P."/>
            <person name="Denys M."/>
            <person name="Detter J.C."/>
            <person name="Escobar J."/>
            <person name="Flowers D."/>
            <person name="Fotopulos D."/>
            <person name="Garcia C."/>
            <person name="Georgescu A.M."/>
            <person name="Glavina T."/>
            <person name="Gomez M."/>
            <person name="Gonzales E."/>
            <person name="Groza M."/>
            <person name="Hammon N."/>
            <person name="Hawkins T."/>
            <person name="Haydu L."/>
            <person name="Ho I."/>
            <person name="Huang W."/>
            <person name="Israni S."/>
            <person name="Jett J."/>
            <person name="Kadner K."/>
            <person name="Kimball H."/>
            <person name="Kobayashi A."/>
            <person name="Larionov V."/>
            <person name="Leem S.-H."/>
            <person name="Lopez F."/>
            <person name="Lou Y."/>
            <person name="Lowry S."/>
            <person name="Malfatti S."/>
            <person name="Martinez D."/>
            <person name="McCready P.M."/>
            <person name="Medina C."/>
            <person name="Morgan J."/>
            <person name="Nelson K."/>
            <person name="Nolan M."/>
            <person name="Ovcharenko I."/>
            <person name="Pitluck S."/>
            <person name="Pollard M."/>
            <person name="Popkie A.P."/>
            <person name="Predki P."/>
            <person name="Quan G."/>
            <person name="Ramirez L."/>
            <person name="Rash S."/>
            <person name="Retterer J."/>
            <person name="Rodriguez A."/>
            <person name="Rogers S."/>
            <person name="Salamov A."/>
            <person name="Salazar A."/>
            <person name="She X."/>
            <person name="Smith D."/>
            <person name="Slezak T."/>
            <person name="Solovyev V."/>
            <person name="Thayer N."/>
            <person name="Tice H."/>
            <person name="Tsai M."/>
            <person name="Ustaszewska A."/>
            <person name="Vo N."/>
            <person name="Wagner M."/>
            <person name="Wheeler J."/>
            <person name="Wu K."/>
            <person name="Xie G."/>
            <person name="Yang J."/>
            <person name="Dubchak I."/>
            <person name="Furey T.S."/>
            <person name="DeJong P."/>
            <person name="Dickson M."/>
            <person name="Gordon D."/>
            <person name="Eichler E.E."/>
            <person name="Pennacchio L.A."/>
            <person name="Richardson P."/>
            <person name="Stubbs L."/>
            <person name="Rokhsar D.S."/>
            <person name="Myers R.M."/>
            <person name="Rubin E.M."/>
            <person name="Lucas S.M."/>
        </authorList>
    </citation>
    <scope>NUCLEOTIDE SEQUENCE [LARGE SCALE GENOMIC DNA]</scope>
</reference>
<reference key="2">
    <citation type="journal article" date="2004" name="Genome Res.">
        <title>The status, quality, and expansion of the NIH full-length cDNA project: the Mammalian Gene Collection (MGC).</title>
        <authorList>
            <consortium name="The MGC Project Team"/>
        </authorList>
    </citation>
    <scope>NUCLEOTIDE SEQUENCE [LARGE SCALE MRNA] OF 1-247</scope>
    <source>
        <tissue>Brain</tissue>
    </source>
</reference>
<reference key="3">
    <citation type="journal article" date="2007" name="BMC Genomics">
        <title>The full-ORF clone resource of the German cDNA consortium.</title>
        <authorList>
            <person name="Bechtel S."/>
            <person name="Rosenfelder H."/>
            <person name="Duda A."/>
            <person name="Schmidt C.P."/>
            <person name="Ernst U."/>
            <person name="Wellenreuther R."/>
            <person name="Mehrle A."/>
            <person name="Schuster C."/>
            <person name="Bahr A."/>
            <person name="Bloecker H."/>
            <person name="Heubner D."/>
            <person name="Hoerlein A."/>
            <person name="Michel G."/>
            <person name="Wedler H."/>
            <person name="Koehrer K."/>
            <person name="Ottenwaelder B."/>
            <person name="Poustka A."/>
            <person name="Wiemann S."/>
            <person name="Schupp I."/>
        </authorList>
    </citation>
    <scope>NUCLEOTIDE SEQUENCE [LARGE SCALE MRNA] OF 345-922</scope>
    <scope>VARIANT 778-GLN--GLU-785 DEL</scope>
    <source>
        <tissue>Testis</tissue>
    </source>
</reference>
<reference key="4">
    <citation type="journal article" date="2004" name="Nat. Genet.">
        <title>Complete sequencing and characterization of 21,243 full-length human cDNAs.</title>
        <authorList>
            <person name="Ota T."/>
            <person name="Suzuki Y."/>
            <person name="Nishikawa T."/>
            <person name="Otsuki T."/>
            <person name="Sugiyama T."/>
            <person name="Irie R."/>
            <person name="Wakamatsu A."/>
            <person name="Hayashi K."/>
            <person name="Sato H."/>
            <person name="Nagai K."/>
            <person name="Kimura K."/>
            <person name="Makita H."/>
            <person name="Sekine M."/>
            <person name="Obayashi M."/>
            <person name="Nishi T."/>
            <person name="Shibahara T."/>
            <person name="Tanaka T."/>
            <person name="Ishii S."/>
            <person name="Yamamoto J."/>
            <person name="Saito K."/>
            <person name="Kawai Y."/>
            <person name="Isono Y."/>
            <person name="Nakamura Y."/>
            <person name="Nagahari K."/>
            <person name="Murakami K."/>
            <person name="Yasuda T."/>
            <person name="Iwayanagi T."/>
            <person name="Wagatsuma M."/>
            <person name="Shiratori A."/>
            <person name="Sudo H."/>
            <person name="Hosoiri T."/>
            <person name="Kaku Y."/>
            <person name="Kodaira H."/>
            <person name="Kondo H."/>
            <person name="Sugawara M."/>
            <person name="Takahashi M."/>
            <person name="Kanda K."/>
            <person name="Yokoi T."/>
            <person name="Furuya T."/>
            <person name="Kikkawa E."/>
            <person name="Omura Y."/>
            <person name="Abe K."/>
            <person name="Kamihara K."/>
            <person name="Katsuta N."/>
            <person name="Sato K."/>
            <person name="Tanikawa M."/>
            <person name="Yamazaki M."/>
            <person name="Ninomiya K."/>
            <person name="Ishibashi T."/>
            <person name="Yamashita H."/>
            <person name="Murakawa K."/>
            <person name="Fujimori K."/>
            <person name="Tanai H."/>
            <person name="Kimata M."/>
            <person name="Watanabe M."/>
            <person name="Hiraoka S."/>
            <person name="Chiba Y."/>
            <person name="Ishida S."/>
            <person name="Ono Y."/>
            <person name="Takiguchi S."/>
            <person name="Watanabe S."/>
            <person name="Yosida M."/>
            <person name="Hotuta T."/>
            <person name="Kusano J."/>
            <person name="Kanehori K."/>
            <person name="Takahashi-Fujii A."/>
            <person name="Hara H."/>
            <person name="Tanase T.-O."/>
            <person name="Nomura Y."/>
            <person name="Togiya S."/>
            <person name="Komai F."/>
            <person name="Hara R."/>
            <person name="Takeuchi K."/>
            <person name="Arita M."/>
            <person name="Imose N."/>
            <person name="Musashino K."/>
            <person name="Yuuki H."/>
            <person name="Oshima A."/>
            <person name="Sasaki N."/>
            <person name="Aotsuka S."/>
            <person name="Yoshikawa Y."/>
            <person name="Matsunawa H."/>
            <person name="Ichihara T."/>
            <person name="Shiohata N."/>
            <person name="Sano S."/>
            <person name="Moriya S."/>
            <person name="Momiyama H."/>
            <person name="Satoh N."/>
            <person name="Takami S."/>
            <person name="Terashima Y."/>
            <person name="Suzuki O."/>
            <person name="Nakagawa S."/>
            <person name="Senoh A."/>
            <person name="Mizoguchi H."/>
            <person name="Goto Y."/>
            <person name="Shimizu F."/>
            <person name="Wakebe H."/>
            <person name="Hishigaki H."/>
            <person name="Watanabe T."/>
            <person name="Sugiyama A."/>
            <person name="Takemoto M."/>
            <person name="Kawakami B."/>
            <person name="Yamazaki M."/>
            <person name="Watanabe K."/>
            <person name="Kumagai A."/>
            <person name="Itakura S."/>
            <person name="Fukuzumi Y."/>
            <person name="Fujimori Y."/>
            <person name="Komiyama M."/>
            <person name="Tashiro H."/>
            <person name="Tanigami A."/>
            <person name="Fujiwara T."/>
            <person name="Ono T."/>
            <person name="Yamada K."/>
            <person name="Fujii Y."/>
            <person name="Ozaki K."/>
            <person name="Hirao M."/>
            <person name="Ohmori Y."/>
            <person name="Kawabata A."/>
            <person name="Hikiji T."/>
            <person name="Kobatake N."/>
            <person name="Inagaki H."/>
            <person name="Ikema Y."/>
            <person name="Okamoto S."/>
            <person name="Okitani R."/>
            <person name="Kawakami T."/>
            <person name="Noguchi S."/>
            <person name="Itoh T."/>
            <person name="Shigeta K."/>
            <person name="Senba T."/>
            <person name="Matsumura K."/>
            <person name="Nakajima Y."/>
            <person name="Mizuno T."/>
            <person name="Morinaga M."/>
            <person name="Sasaki M."/>
            <person name="Togashi T."/>
            <person name="Oyama M."/>
            <person name="Hata H."/>
            <person name="Watanabe M."/>
            <person name="Komatsu T."/>
            <person name="Mizushima-Sugano J."/>
            <person name="Satoh T."/>
            <person name="Shirai Y."/>
            <person name="Takahashi Y."/>
            <person name="Nakagawa K."/>
            <person name="Okumura K."/>
            <person name="Nagase T."/>
            <person name="Nomura N."/>
            <person name="Kikuchi H."/>
            <person name="Masuho Y."/>
            <person name="Yamashita R."/>
            <person name="Nakai K."/>
            <person name="Yada T."/>
            <person name="Nakamura Y."/>
            <person name="Ohara O."/>
            <person name="Isogai T."/>
            <person name="Sugano S."/>
        </authorList>
    </citation>
    <scope>NUCLEOTIDE SEQUENCE [LARGE SCALE MRNA] OF 452-922</scope>
    <scope>VARIANT 778-GLN--GLU-785 DEL</scope>
    <source>
        <tissue>Thymus</tissue>
    </source>
</reference>
<keyword id="KW-1267">Proteomics identification</keyword>
<keyword id="KW-1185">Reference proteome</keyword>
<gene>
    <name evidence="5" type="primary">GARIN5B</name>
    <name type="synonym">C19orf16</name>
    <name type="synonym">FAM71E2</name>
</gene>
<name>GAR5B_HUMAN</name>
<evidence type="ECO:0000256" key="1">
    <source>
        <dbReference type="SAM" id="MobiDB-lite"/>
    </source>
</evidence>
<evidence type="ECO:0000269" key="2">
    <source>
    </source>
</evidence>
<evidence type="ECO:0000269" key="3">
    <source>
    </source>
</evidence>
<evidence type="ECO:0000305" key="4"/>
<evidence type="ECO:0000312" key="5">
    <source>
        <dbReference type="HGNC" id="HGNC:25278"/>
    </source>
</evidence>
<protein>
    <recommendedName>
        <fullName evidence="4">Golgi-associated RAB2 interactor protein 5B</fullName>
    </recommendedName>
</protein>
<dbReference type="EMBL" id="AC020922">
    <property type="status" value="NOT_ANNOTATED_CDS"/>
    <property type="molecule type" value="Genomic_DNA"/>
</dbReference>
<dbReference type="EMBL" id="BC031875">
    <property type="protein sequence ID" value="AAH31875.1"/>
    <property type="status" value="ALT_SEQ"/>
    <property type="molecule type" value="mRNA"/>
</dbReference>
<dbReference type="EMBL" id="AL834316">
    <property type="protein sequence ID" value="CAD38986.2"/>
    <property type="status" value="ALT_INIT"/>
    <property type="molecule type" value="mRNA"/>
</dbReference>
<dbReference type="EMBL" id="AK128284">
    <property type="status" value="NOT_ANNOTATED_CDS"/>
    <property type="molecule type" value="mRNA"/>
</dbReference>
<dbReference type="RefSeq" id="NP_001138874.1">
    <property type="nucleotide sequence ID" value="NM_001145402.2"/>
</dbReference>
<dbReference type="BioGRID" id="129870">
    <property type="interactions" value="11"/>
</dbReference>
<dbReference type="FunCoup" id="Q8N5Q1">
    <property type="interactions" value="58"/>
</dbReference>
<dbReference type="IntAct" id="Q8N5Q1">
    <property type="interactions" value="2"/>
</dbReference>
<dbReference type="STRING" id="9606.ENSP00000398617"/>
<dbReference type="GlyGen" id="Q8N5Q1">
    <property type="glycosylation" value="1 site"/>
</dbReference>
<dbReference type="iPTMnet" id="Q8N5Q1"/>
<dbReference type="PhosphoSitePlus" id="Q8N5Q1"/>
<dbReference type="BioMuta" id="FAM71E2"/>
<dbReference type="DMDM" id="332278208"/>
<dbReference type="jPOST" id="Q8N5Q1"/>
<dbReference type="MassIVE" id="Q8N5Q1"/>
<dbReference type="PaxDb" id="9606-ENSP00000398617"/>
<dbReference type="PeptideAtlas" id="Q8N5Q1"/>
<dbReference type="ProteomicsDB" id="72081"/>
<dbReference type="Antibodypedia" id="62443">
    <property type="antibodies" value="29 antibodies from 10 providers"/>
</dbReference>
<dbReference type="DNASU" id="284418"/>
<dbReference type="Ensembl" id="ENST00000424985.3">
    <property type="protein sequence ID" value="ENSP00000398617.1"/>
    <property type="gene ID" value="ENSG00000180043.11"/>
</dbReference>
<dbReference type="GeneID" id="284418"/>
<dbReference type="KEGG" id="hsa:284418"/>
<dbReference type="MANE-Select" id="ENST00000424985.3">
    <property type="protein sequence ID" value="ENSP00000398617.1"/>
    <property type="RefSeq nucleotide sequence ID" value="NM_001145402.2"/>
    <property type="RefSeq protein sequence ID" value="NP_001138874.1"/>
</dbReference>
<dbReference type="UCSC" id="uc002qkr.3">
    <property type="organism name" value="human"/>
</dbReference>
<dbReference type="AGR" id="HGNC:25278"/>
<dbReference type="CTD" id="284418"/>
<dbReference type="GeneCards" id="GARIN5B"/>
<dbReference type="HGNC" id="HGNC:25278">
    <property type="gene designation" value="GARIN5B"/>
</dbReference>
<dbReference type="HPA" id="ENSG00000180043">
    <property type="expression patterns" value="Tissue enriched (testis)"/>
</dbReference>
<dbReference type="MIM" id="621103">
    <property type="type" value="gene"/>
</dbReference>
<dbReference type="neXtProt" id="NX_Q8N5Q1"/>
<dbReference type="OpenTargets" id="ENSG00000180043"/>
<dbReference type="VEuPathDB" id="HostDB:ENSG00000180043"/>
<dbReference type="eggNOG" id="ENOG502S1VC">
    <property type="taxonomic scope" value="Eukaryota"/>
</dbReference>
<dbReference type="GeneTree" id="ENSGT00940000163150"/>
<dbReference type="HOGENOM" id="CLU_369171_0_0_1"/>
<dbReference type="InParanoid" id="Q8N5Q1"/>
<dbReference type="OMA" id="HLCVHDL"/>
<dbReference type="OrthoDB" id="14992at9604"/>
<dbReference type="PAN-GO" id="Q8N5Q1">
    <property type="GO annotations" value="0 GO annotations based on evolutionary models"/>
</dbReference>
<dbReference type="PhylomeDB" id="Q8N5Q1"/>
<dbReference type="TreeFam" id="TF337884"/>
<dbReference type="PathwayCommons" id="Q8N5Q1"/>
<dbReference type="SignaLink" id="Q8N5Q1"/>
<dbReference type="BioGRID-ORCS" id="284418">
    <property type="hits" value="2 hits in 309 CRISPR screens"/>
</dbReference>
<dbReference type="ChiTaRS" id="FAM71E2">
    <property type="organism name" value="human"/>
</dbReference>
<dbReference type="GenomeRNAi" id="284418"/>
<dbReference type="Pharos" id="Q8N5Q1">
    <property type="development level" value="Tdark"/>
</dbReference>
<dbReference type="PRO" id="PR:Q8N5Q1"/>
<dbReference type="Proteomes" id="UP000005640">
    <property type="component" value="Chromosome 19"/>
</dbReference>
<dbReference type="RNAct" id="Q8N5Q1">
    <property type="molecule type" value="protein"/>
</dbReference>
<dbReference type="Bgee" id="ENSG00000180043">
    <property type="expression patterns" value="Expressed in right testis and 15 other cell types or tissues"/>
</dbReference>
<dbReference type="ExpressionAtlas" id="Q8N5Q1">
    <property type="expression patterns" value="baseline and differential"/>
</dbReference>
<dbReference type="InterPro" id="IPR022168">
    <property type="entry name" value="GARIL-like_Rab2B-bd"/>
</dbReference>
<dbReference type="PANTHER" id="PTHR22574">
    <property type="match status" value="1"/>
</dbReference>
<dbReference type="PANTHER" id="PTHR22574:SF12">
    <property type="entry name" value="GOLGI-ASSOCIATED RAB2 INTERACTOR PROTEIN 5B"/>
    <property type="match status" value="1"/>
</dbReference>
<dbReference type="Pfam" id="PF12480">
    <property type="entry name" value="GARIL_Rab2_bd"/>
    <property type="match status" value="1"/>
</dbReference>
<accession>Q8N5Q1</accession>
<accession>Q8ND99</accession>
<proteinExistence type="evidence at protein level"/>
<comment type="similarity">
    <text evidence="4">Belongs to the GARIN family.</text>
</comment>
<comment type="sequence caution" evidence="4">
    <conflict type="frameshift">
        <sequence resource="EMBL-CDS" id="AAH31875"/>
    </conflict>
</comment>
<comment type="sequence caution" evidence="4">
    <conflict type="miscellaneous discrepancy">
        <sequence resource="EMBL-CDS" id="AAH31875"/>
    </conflict>
    <text>Contaminating sequence. Potential poly-A sequence.</text>
</comment>
<comment type="sequence caution" evidence="4">
    <conflict type="erroneous initiation">
        <sequence resource="EMBL-CDS" id="CAD38986"/>
    </conflict>
    <text>Truncated N-terminus.</text>
</comment>
<feature type="chain" id="PRO_0000341369" description="Golgi-associated RAB2 interactor protein 5B">
    <location>
        <begin position="1"/>
        <end position="922"/>
    </location>
</feature>
<feature type="region of interest" description="Disordered" evidence="1">
    <location>
        <begin position="244"/>
        <end position="264"/>
    </location>
</feature>
<feature type="region of interest" description="Disordered" evidence="1">
    <location>
        <begin position="292"/>
        <end position="317"/>
    </location>
</feature>
<feature type="region of interest" description="Disordered" evidence="1">
    <location>
        <begin position="373"/>
        <end position="404"/>
    </location>
</feature>
<feature type="region of interest" description="Disordered" evidence="1">
    <location>
        <begin position="424"/>
        <end position="597"/>
    </location>
</feature>
<feature type="region of interest" description="Disordered" evidence="1">
    <location>
        <begin position="758"/>
        <end position="830"/>
    </location>
</feature>
<feature type="region of interest" description="Disordered" evidence="1">
    <location>
        <begin position="842"/>
        <end position="869"/>
    </location>
</feature>
<feature type="compositionally biased region" description="Polar residues" evidence="1">
    <location>
        <begin position="292"/>
        <end position="305"/>
    </location>
</feature>
<feature type="compositionally biased region" description="Pro residues" evidence="1">
    <location>
        <begin position="431"/>
        <end position="441"/>
    </location>
</feature>
<feature type="compositionally biased region" description="Low complexity" evidence="1">
    <location>
        <begin position="442"/>
        <end position="458"/>
    </location>
</feature>
<feature type="compositionally biased region" description="Low complexity" evidence="1">
    <location>
        <begin position="471"/>
        <end position="495"/>
    </location>
</feature>
<feature type="compositionally biased region" description="Pro residues" evidence="1">
    <location>
        <begin position="496"/>
        <end position="507"/>
    </location>
</feature>
<feature type="compositionally biased region" description="Basic and acidic residues" evidence="1">
    <location>
        <begin position="758"/>
        <end position="788"/>
    </location>
</feature>
<feature type="sequence variant" id="VAR_070950" description="In dbSNP:rs35996821." evidence="2 3">
    <location>
        <begin position="778"/>
        <end position="785"/>
    </location>
</feature>
<feature type="sequence conflict" description="In Ref. 3; CAD38986." evidence="4" ref="3">
    <original>L</original>
    <variation>P</variation>
    <location>
        <position position="406"/>
    </location>
</feature>
<feature type="sequence conflict" description="In Ref. 3; CAD38986 and 4; AK128284." evidence="4" ref="3 4">
    <original>E</original>
    <variation>Q</variation>
    <location>
        <position position="546"/>
    </location>
</feature>
<feature type="sequence conflict" description="In Ref. 3; CAD38986 and 4; AK128284." evidence="4" ref="3 4">
    <original>K</original>
    <variation>E</variation>
    <location>
        <position position="629"/>
    </location>
</feature>
<feature type="sequence conflict" description="In Ref. 3; CAD38986 and 4; AK128284." evidence="4" ref="3 4">
    <original>P</original>
    <variation>R</variation>
    <location>
        <position position="711"/>
    </location>
</feature>
<sequence>MIWLRNRRCLEPLQGTPKWVPVLGELQKTLQKGEYLPLRPLPMFESNFVQVTHQGGPVFVNHRTNRLAMGVAASLPGLVLPDILLIGQPAEDRDCSGLVLTRMIPLDLVHLCVHDLSAWRLKLRLVSGRQYYLALDAPDNEVGFLFHCWVRLINLLQEPAPTWTPRTTRTAPLDMPLAEAPASTWHLQDQPISRHAVRVAERNFPHKTVAAQRQRKAKALKRSFKSQAVGDSVPLIWSQLEHADVRKKPAEKKSHSDPRPDRTHTQIRLPEKTSITTWTIFSIISSTANQTQSSPKACTSASDEATGQGHVVESPSHCVSADSPDGFFLGSCSSLDPCLWHQDTEDLMDSGGSTLSSAASGLAPYPPAACLSTPYSSIPRGREKAGPMGSHQGPGPPPCQKAPSGLVTSCKAPFLVDQSQKLPAVPASSWKPPPGLAPPQKAPAASAPPRKAPAVPAPSQKAPAVPAPSQKAPAIPAPSRKASAASASPRKASAVPAPPQKTPPPSQKAPSVPTIPQKAVSPTAPKKKSLLLPAPSQKALPTSPTEYQMALSPPASRGKLPGDFDVLPTGIPGRAVLERSQSGGKPEPVVTVRTQETDVVEMTTQAKSPESPFTVTKKESKDILISQTKEVTLEAFRGQGKLEDWAHWAKLEERSPDLPGVRSKELEQRKRWVKAKELAVEGPSQEHSRPFSVEALTLTKLMITANSKEQPSKSALVSLPSWLLATPQASATSMMASVPSRPGQLSLLEGKPVVVREQPESHTWVKEGKRPWGEMKEQPWGEMKEPPWDPKGPPKVPFRSKPTSASLKREGISQAPIPLTASPWEDLRPSPLSETLISKMEATARASQQPKRVSQEPMRMPAQHPLATVGSSSEILLPMLLELETVRNTATKAEEIQEESGVLNLLPSLQHSQHSEWPDAGA</sequence>
<organism>
    <name type="scientific">Homo sapiens</name>
    <name type="common">Human</name>
    <dbReference type="NCBI Taxonomy" id="9606"/>
    <lineage>
        <taxon>Eukaryota</taxon>
        <taxon>Metazoa</taxon>
        <taxon>Chordata</taxon>
        <taxon>Craniata</taxon>
        <taxon>Vertebrata</taxon>
        <taxon>Euteleostomi</taxon>
        <taxon>Mammalia</taxon>
        <taxon>Eutheria</taxon>
        <taxon>Euarchontoglires</taxon>
        <taxon>Primates</taxon>
        <taxon>Haplorrhini</taxon>
        <taxon>Catarrhini</taxon>
        <taxon>Hominidae</taxon>
        <taxon>Homo</taxon>
    </lineage>
</organism>